<gene>
    <name type="ordered locus">MMP1468</name>
</gene>
<feature type="chain" id="PRO_0000339869" description="L-cysteine desulfidase">
    <location>
        <begin position="1"/>
        <end position="396"/>
    </location>
</feature>
<feature type="active site" description="Proton acceptor" evidence="1">
    <location>
        <position position="23"/>
    </location>
</feature>
<feature type="binding site" evidence="1">
    <location>
        <position position="287"/>
    </location>
    <ligand>
        <name>[4Fe-4S] cluster</name>
        <dbReference type="ChEBI" id="CHEBI:49883"/>
    </ligand>
</feature>
<feature type="binding site" evidence="1">
    <location>
        <position position="329"/>
    </location>
    <ligand>
        <name>[4Fe-4S] cluster</name>
        <dbReference type="ChEBI" id="CHEBI:49883"/>
    </ligand>
</feature>
<feature type="binding site" evidence="1">
    <location>
        <position position="336"/>
    </location>
    <ligand>
        <name>[4Fe-4S] cluster</name>
        <dbReference type="ChEBI" id="CHEBI:49883"/>
    </ligand>
</feature>
<accession>Q6LX84</accession>
<proteinExistence type="inferred from homology"/>
<organism>
    <name type="scientific">Methanococcus maripaludis (strain DSM 14266 / JCM 13030 / NBRC 101832 / S2 / LL)</name>
    <dbReference type="NCBI Taxonomy" id="267377"/>
    <lineage>
        <taxon>Archaea</taxon>
        <taxon>Methanobacteriati</taxon>
        <taxon>Methanobacteriota</taxon>
        <taxon>Methanomada group</taxon>
        <taxon>Methanococci</taxon>
        <taxon>Methanococcales</taxon>
        <taxon>Methanococcaceae</taxon>
        <taxon>Methanococcus</taxon>
    </lineage>
</organism>
<sequence length="396" mass="43545">MDDYKRILITKILKNEVTEALGCTEVGLIGYAVSLCNISDPFSIEKIELTLNNGSFKNAYAVGVPNTKKYGILPAVVGGLLGDHKNKLLVFNGIKYSQKLEDFIKERLKIRVINSPLYCGVKIKDNSGNTFESLIKDNHLNVVIPKINNKLISEINGSEKEEYKNLELLDFLEYIDEIPEEIIQLVEKTIYTNNNLIKGDFLNFGNDCLSNMVNKTTSACNTRMIGENMPAMSVAKSGNMGIMATLPIIAYDYSNEQNQEKLIKSILLSVLVTIYATYKSSYLSSMCGCVSKGGMGAVIGLCYYKNGKNIKKLDSAARTFTANLPGIICDGGKVGCALKLASGCFAAYSSLFVDISYENGIVGKNFKECVENISEISKIMGDLDSDIVKIMSKKEI</sequence>
<dbReference type="EC" id="4.4.1.28" evidence="1"/>
<dbReference type="EMBL" id="BX950229">
    <property type="protein sequence ID" value="CAF31024.1"/>
    <property type="molecule type" value="Genomic_DNA"/>
</dbReference>
<dbReference type="RefSeq" id="WP_011171412.1">
    <property type="nucleotide sequence ID" value="NC_005791.1"/>
</dbReference>
<dbReference type="STRING" id="267377.MMP1468"/>
<dbReference type="DNASU" id="2761691"/>
<dbReference type="EnsemblBacteria" id="CAF31024">
    <property type="protein sequence ID" value="CAF31024"/>
    <property type="gene ID" value="MMP1468"/>
</dbReference>
<dbReference type="GeneID" id="2761691"/>
<dbReference type="KEGG" id="mmp:MMP1468"/>
<dbReference type="PATRIC" id="fig|267377.15.peg.1504"/>
<dbReference type="eggNOG" id="arCOG05065">
    <property type="taxonomic scope" value="Archaea"/>
</dbReference>
<dbReference type="HOGENOM" id="CLU_051840_0_0_2"/>
<dbReference type="OrthoDB" id="60297at2157"/>
<dbReference type="Proteomes" id="UP000000590">
    <property type="component" value="Chromosome"/>
</dbReference>
<dbReference type="GO" id="GO:0051539">
    <property type="term" value="F:4 iron, 4 sulfur cluster binding"/>
    <property type="evidence" value="ECO:0007669"/>
    <property type="project" value="UniProtKB-KW"/>
</dbReference>
<dbReference type="GO" id="GO:0080146">
    <property type="term" value="F:L-cysteine desulfhydrase activity"/>
    <property type="evidence" value="ECO:0007669"/>
    <property type="project" value="RHEA"/>
</dbReference>
<dbReference type="GO" id="GO:0046872">
    <property type="term" value="F:metal ion binding"/>
    <property type="evidence" value="ECO:0007669"/>
    <property type="project" value="UniProtKB-KW"/>
</dbReference>
<dbReference type="GO" id="GO:0019450">
    <property type="term" value="P:L-cysteine catabolic process to pyruvate"/>
    <property type="evidence" value="ECO:0007669"/>
    <property type="project" value="TreeGrafter"/>
</dbReference>
<dbReference type="InterPro" id="IPR005130">
    <property type="entry name" value="Ser_deHydtase-like_asu"/>
</dbReference>
<dbReference type="InterPro" id="IPR021144">
    <property type="entry name" value="UPF0597"/>
</dbReference>
<dbReference type="PANTHER" id="PTHR30501">
    <property type="entry name" value="UPF0597 PROTEIN YHAM"/>
    <property type="match status" value="1"/>
</dbReference>
<dbReference type="PANTHER" id="PTHR30501:SF2">
    <property type="entry name" value="UPF0597 PROTEIN YHAM"/>
    <property type="match status" value="1"/>
</dbReference>
<dbReference type="Pfam" id="PF03313">
    <property type="entry name" value="SDH_alpha"/>
    <property type="match status" value="1"/>
</dbReference>
<dbReference type="PIRSF" id="PIRSF006054">
    <property type="entry name" value="UCP006054"/>
    <property type="match status" value="1"/>
</dbReference>
<evidence type="ECO:0000250" key="1">
    <source>
        <dbReference type="UniProtKB" id="Q58431"/>
    </source>
</evidence>
<evidence type="ECO:0000305" key="2"/>
<reference key="1">
    <citation type="journal article" date="2004" name="J. Bacteriol.">
        <title>Complete genome sequence of the genetically tractable hydrogenotrophic methanogen Methanococcus maripaludis.</title>
        <authorList>
            <person name="Hendrickson E.L."/>
            <person name="Kaul R."/>
            <person name="Zhou Y."/>
            <person name="Bovee D."/>
            <person name="Chapman P."/>
            <person name="Chung J."/>
            <person name="Conway de Macario E."/>
            <person name="Dodsworth J.A."/>
            <person name="Gillett W."/>
            <person name="Graham D.E."/>
            <person name="Hackett M."/>
            <person name="Haydock A.K."/>
            <person name="Kang A."/>
            <person name="Land M.L."/>
            <person name="Levy R."/>
            <person name="Lie T.J."/>
            <person name="Major T.A."/>
            <person name="Moore B.C."/>
            <person name="Porat I."/>
            <person name="Palmeiri A."/>
            <person name="Rouse G."/>
            <person name="Saenphimmachak C."/>
            <person name="Soell D."/>
            <person name="Van Dien S."/>
            <person name="Wang T."/>
            <person name="Whitman W.B."/>
            <person name="Xia Q."/>
            <person name="Zhang Y."/>
            <person name="Larimer F.W."/>
            <person name="Olson M.V."/>
            <person name="Leigh J.A."/>
        </authorList>
    </citation>
    <scope>NUCLEOTIDE SEQUENCE [LARGE SCALE GENOMIC DNA]</scope>
    <source>
        <strain>DSM 14266 / JCM 13030 / NBRC 101832 / S2 / LL</strain>
    </source>
</reference>
<protein>
    <recommendedName>
        <fullName evidence="1">L-cysteine desulfidase</fullName>
        <ecNumber evidence="1">4.4.1.28</ecNumber>
    </recommendedName>
    <alternativeName>
        <fullName>L-cysteine desulfhydrase</fullName>
    </alternativeName>
</protein>
<name>CYDE_METMP</name>
<comment type="function">
    <text evidence="1">Catalyzes the cleavage of L-cysteine to form 2-aminoprop-2-enoate and sulfide. The former then spontaneously hydrolyzes to pyruvate and NH(3). May be responsible for the production of sulfide required for the biosynthesis of iron-sulfur centers in this archaea.</text>
</comment>
<comment type="catalytic activity">
    <reaction evidence="1">
        <text>L-cysteine + H2O = hydrogen sulfide + pyruvate + NH4(+) + H(+)</text>
        <dbReference type="Rhea" id="RHEA:24931"/>
        <dbReference type="ChEBI" id="CHEBI:15361"/>
        <dbReference type="ChEBI" id="CHEBI:15377"/>
        <dbReference type="ChEBI" id="CHEBI:15378"/>
        <dbReference type="ChEBI" id="CHEBI:28938"/>
        <dbReference type="ChEBI" id="CHEBI:29919"/>
        <dbReference type="ChEBI" id="CHEBI:35235"/>
        <dbReference type="EC" id="4.4.1.28"/>
    </reaction>
</comment>
<comment type="cofactor">
    <cofactor evidence="1">
        <name>[4Fe-4S] cluster</name>
        <dbReference type="ChEBI" id="CHEBI:49883"/>
    </cofactor>
    <text evidence="1">Binds 1 [4Fe-4S] cluster per subunit.</text>
</comment>
<comment type="subunit">
    <text evidence="1">Homotrimer.</text>
</comment>
<comment type="similarity">
    <text evidence="2">Belongs to the L-cysteine desulfidase family.</text>
</comment>
<keyword id="KW-0004">4Fe-4S</keyword>
<keyword id="KW-0408">Iron</keyword>
<keyword id="KW-0411">Iron-sulfur</keyword>
<keyword id="KW-0456">Lyase</keyword>
<keyword id="KW-0479">Metal-binding</keyword>
<keyword id="KW-1185">Reference proteome</keyword>